<keyword id="KW-0687">Ribonucleoprotein</keyword>
<keyword id="KW-0689">Ribosomal protein</keyword>
<name>RS9_MYCBT</name>
<dbReference type="EMBL" id="AP010918">
    <property type="protein sequence ID" value="BAH27780.1"/>
    <property type="molecule type" value="Genomic_DNA"/>
</dbReference>
<dbReference type="RefSeq" id="WP_003418308.1">
    <property type="nucleotide sequence ID" value="NZ_CP014566.1"/>
</dbReference>
<dbReference type="SMR" id="C1AHQ1"/>
<dbReference type="GeneID" id="45427432"/>
<dbReference type="KEGG" id="mbt:JTY_3508"/>
<dbReference type="HOGENOM" id="CLU_046483_2_0_11"/>
<dbReference type="GO" id="GO:0005737">
    <property type="term" value="C:cytoplasm"/>
    <property type="evidence" value="ECO:0007669"/>
    <property type="project" value="UniProtKB-ARBA"/>
</dbReference>
<dbReference type="GO" id="GO:0015935">
    <property type="term" value="C:small ribosomal subunit"/>
    <property type="evidence" value="ECO:0007669"/>
    <property type="project" value="TreeGrafter"/>
</dbReference>
<dbReference type="GO" id="GO:0003723">
    <property type="term" value="F:RNA binding"/>
    <property type="evidence" value="ECO:0007669"/>
    <property type="project" value="TreeGrafter"/>
</dbReference>
<dbReference type="GO" id="GO:0003735">
    <property type="term" value="F:structural constituent of ribosome"/>
    <property type="evidence" value="ECO:0007669"/>
    <property type="project" value="InterPro"/>
</dbReference>
<dbReference type="GO" id="GO:0006412">
    <property type="term" value="P:translation"/>
    <property type="evidence" value="ECO:0007669"/>
    <property type="project" value="UniProtKB-UniRule"/>
</dbReference>
<dbReference type="FunFam" id="3.30.230.10:FF:000001">
    <property type="entry name" value="30S ribosomal protein S9"/>
    <property type="match status" value="1"/>
</dbReference>
<dbReference type="Gene3D" id="3.30.230.10">
    <property type="match status" value="1"/>
</dbReference>
<dbReference type="HAMAP" id="MF_00532_B">
    <property type="entry name" value="Ribosomal_uS9_B"/>
    <property type="match status" value="1"/>
</dbReference>
<dbReference type="InterPro" id="IPR020568">
    <property type="entry name" value="Ribosomal_Su5_D2-typ_SF"/>
</dbReference>
<dbReference type="InterPro" id="IPR000754">
    <property type="entry name" value="Ribosomal_uS9"/>
</dbReference>
<dbReference type="InterPro" id="IPR023035">
    <property type="entry name" value="Ribosomal_uS9_bac/plastid"/>
</dbReference>
<dbReference type="InterPro" id="IPR020574">
    <property type="entry name" value="Ribosomal_uS9_CS"/>
</dbReference>
<dbReference type="InterPro" id="IPR014721">
    <property type="entry name" value="Ribsml_uS5_D2-typ_fold_subgr"/>
</dbReference>
<dbReference type="NCBIfam" id="NF001099">
    <property type="entry name" value="PRK00132.1"/>
    <property type="match status" value="1"/>
</dbReference>
<dbReference type="PANTHER" id="PTHR21569">
    <property type="entry name" value="RIBOSOMAL PROTEIN S9"/>
    <property type="match status" value="1"/>
</dbReference>
<dbReference type="PANTHER" id="PTHR21569:SF1">
    <property type="entry name" value="SMALL RIBOSOMAL SUBUNIT PROTEIN US9M"/>
    <property type="match status" value="1"/>
</dbReference>
<dbReference type="Pfam" id="PF00380">
    <property type="entry name" value="Ribosomal_S9"/>
    <property type="match status" value="1"/>
</dbReference>
<dbReference type="SUPFAM" id="SSF54211">
    <property type="entry name" value="Ribosomal protein S5 domain 2-like"/>
    <property type="match status" value="1"/>
</dbReference>
<dbReference type="PROSITE" id="PS00360">
    <property type="entry name" value="RIBOSOMAL_S9"/>
    <property type="match status" value="1"/>
</dbReference>
<gene>
    <name evidence="1" type="primary">rpsI</name>
    <name type="ordered locus">JTY_3508</name>
</gene>
<feature type="chain" id="PRO_1000146463" description="Small ribosomal subunit protein uS9">
    <location>
        <begin position="1"/>
        <end position="151"/>
    </location>
</feature>
<feature type="region of interest" description="Disordered" evidence="2">
    <location>
        <begin position="1"/>
        <end position="20"/>
    </location>
</feature>
<feature type="region of interest" description="Disordered" evidence="2">
    <location>
        <begin position="121"/>
        <end position="151"/>
    </location>
</feature>
<feature type="compositionally biased region" description="Low complexity" evidence="2">
    <location>
        <begin position="1"/>
        <end position="19"/>
    </location>
</feature>
<feature type="compositionally biased region" description="Basic and acidic residues" evidence="2">
    <location>
        <begin position="127"/>
        <end position="136"/>
    </location>
</feature>
<feature type="compositionally biased region" description="Basic residues" evidence="2">
    <location>
        <begin position="137"/>
        <end position="151"/>
    </location>
</feature>
<organism>
    <name type="scientific">Mycobacterium bovis (strain BCG / Tokyo 172 / ATCC 35737 / TMC 1019)</name>
    <dbReference type="NCBI Taxonomy" id="561275"/>
    <lineage>
        <taxon>Bacteria</taxon>
        <taxon>Bacillati</taxon>
        <taxon>Actinomycetota</taxon>
        <taxon>Actinomycetes</taxon>
        <taxon>Mycobacteriales</taxon>
        <taxon>Mycobacteriaceae</taxon>
        <taxon>Mycobacterium</taxon>
        <taxon>Mycobacterium tuberculosis complex</taxon>
    </lineage>
</organism>
<comment type="similarity">
    <text evidence="1">Belongs to the universal ribosomal protein uS9 family.</text>
</comment>
<proteinExistence type="inferred from homology"/>
<evidence type="ECO:0000255" key="1">
    <source>
        <dbReference type="HAMAP-Rule" id="MF_00532"/>
    </source>
</evidence>
<evidence type="ECO:0000256" key="2">
    <source>
        <dbReference type="SAM" id="MobiDB-lite"/>
    </source>
</evidence>
<evidence type="ECO:0000305" key="3"/>
<sequence length="151" mass="16436">MTETTPAPQTPAAPAGPAQSFVLERPIQTVGRRKEAVVRVRLVPGTGKFDLNGRSLEDYFPNKVHQQLIKAPLVTVDRVESFDIFAHLGGGGPSGQAGALRLGIARALILVSPEDRPALKKAGFLTRDPRATERKKYGLKKARKAPQYSKR</sequence>
<protein>
    <recommendedName>
        <fullName evidence="1">Small ribosomal subunit protein uS9</fullName>
    </recommendedName>
    <alternativeName>
        <fullName evidence="3">30S ribosomal protein S9</fullName>
    </alternativeName>
</protein>
<accession>C1AHQ1</accession>
<reference key="1">
    <citation type="journal article" date="2009" name="Vaccine">
        <title>Whole genome sequence analysis of Mycobacterium bovis bacillus Calmette-Guerin (BCG) Tokyo 172: a comparative study of BCG vaccine substrains.</title>
        <authorList>
            <person name="Seki M."/>
            <person name="Honda I."/>
            <person name="Fujita I."/>
            <person name="Yano I."/>
            <person name="Yamamoto S."/>
            <person name="Koyama A."/>
        </authorList>
    </citation>
    <scope>NUCLEOTIDE SEQUENCE [LARGE SCALE GENOMIC DNA]</scope>
    <source>
        <strain>BCG / Tokyo 172 / ATCC 35737 / TMC 1019</strain>
    </source>
</reference>